<organism>
    <name type="scientific">Arthrobacter sp. (strain FB24)</name>
    <dbReference type="NCBI Taxonomy" id="290399"/>
    <lineage>
        <taxon>Bacteria</taxon>
        <taxon>Bacillati</taxon>
        <taxon>Actinomycetota</taxon>
        <taxon>Actinomycetes</taxon>
        <taxon>Micrococcales</taxon>
        <taxon>Micrococcaceae</taxon>
        <taxon>Arthrobacter</taxon>
    </lineage>
</organism>
<sequence>MTKPIPAASGTAPAALFGASDVRRLAEEIGVRPTKTLGQNFVIDGNTIRRIVAAADIHADETVLEVGPGLGSLTLGLLDAAKSVVAVEIDPVLAAKLPGTVQQWRPGAAKDFHLVLADAMKVTELPVEPTALVANLPYNVAVPVVLHLLQHFPSLRHGLVMVQDEVADRLAAGPGSKTYGVPSVKAAWYSSMRKAGVIGMNVFWPAPKIHSGLVAFTRREPPVTSATREQVFAVIDAAFAQRRKTLRAALAGWAGSAAEAEQCLLAAGVDPTARGEVIDIAAFARIAEARQDRQA</sequence>
<name>RSMA_ARTS2</name>
<gene>
    <name evidence="1" type="primary">rsmA</name>
    <name evidence="1" type="synonym">ksgA</name>
    <name type="ordered locus">Arth_1213</name>
</gene>
<dbReference type="EC" id="2.1.1.182" evidence="1"/>
<dbReference type="EMBL" id="CP000454">
    <property type="protein sequence ID" value="ABK02607.1"/>
    <property type="molecule type" value="Genomic_DNA"/>
</dbReference>
<dbReference type="RefSeq" id="WP_011691074.1">
    <property type="nucleotide sequence ID" value="NC_008541.1"/>
</dbReference>
<dbReference type="SMR" id="A0JU87"/>
<dbReference type="STRING" id="290399.Arth_1213"/>
<dbReference type="KEGG" id="art:Arth_1213"/>
<dbReference type="eggNOG" id="COG0030">
    <property type="taxonomic scope" value="Bacteria"/>
</dbReference>
<dbReference type="HOGENOM" id="CLU_041220_1_1_11"/>
<dbReference type="OrthoDB" id="9814755at2"/>
<dbReference type="Proteomes" id="UP000000754">
    <property type="component" value="Chromosome"/>
</dbReference>
<dbReference type="GO" id="GO:0005829">
    <property type="term" value="C:cytosol"/>
    <property type="evidence" value="ECO:0007669"/>
    <property type="project" value="TreeGrafter"/>
</dbReference>
<dbReference type="GO" id="GO:0052908">
    <property type="term" value="F:16S rRNA (adenine(1518)-N(6)/adenine(1519)-N(6))-dimethyltransferase activity"/>
    <property type="evidence" value="ECO:0007669"/>
    <property type="project" value="UniProtKB-EC"/>
</dbReference>
<dbReference type="GO" id="GO:0003723">
    <property type="term" value="F:RNA binding"/>
    <property type="evidence" value="ECO:0007669"/>
    <property type="project" value="UniProtKB-KW"/>
</dbReference>
<dbReference type="FunFam" id="1.10.8.100:FF:000003">
    <property type="entry name" value="Ribosomal RNA small subunit methyltransferase A"/>
    <property type="match status" value="1"/>
</dbReference>
<dbReference type="FunFam" id="3.40.50.150:FF:000023">
    <property type="entry name" value="Ribosomal RNA small subunit methyltransferase A"/>
    <property type="match status" value="1"/>
</dbReference>
<dbReference type="Gene3D" id="1.10.8.100">
    <property type="entry name" value="Ribosomal RNA adenine dimethylase-like, domain 2"/>
    <property type="match status" value="1"/>
</dbReference>
<dbReference type="Gene3D" id="3.40.50.150">
    <property type="entry name" value="Vaccinia Virus protein VP39"/>
    <property type="match status" value="1"/>
</dbReference>
<dbReference type="HAMAP" id="MF_00607">
    <property type="entry name" value="16SrRNA_methyltr_A"/>
    <property type="match status" value="1"/>
</dbReference>
<dbReference type="InterPro" id="IPR001737">
    <property type="entry name" value="KsgA/Erm"/>
</dbReference>
<dbReference type="InterPro" id="IPR023165">
    <property type="entry name" value="rRNA_Ade_diMease-like_C"/>
</dbReference>
<dbReference type="InterPro" id="IPR020596">
    <property type="entry name" value="rRNA_Ade_Mease_Trfase_CS"/>
</dbReference>
<dbReference type="InterPro" id="IPR020598">
    <property type="entry name" value="rRNA_Ade_methylase_Trfase_N"/>
</dbReference>
<dbReference type="InterPro" id="IPR011530">
    <property type="entry name" value="rRNA_adenine_dimethylase"/>
</dbReference>
<dbReference type="InterPro" id="IPR029063">
    <property type="entry name" value="SAM-dependent_MTases_sf"/>
</dbReference>
<dbReference type="NCBIfam" id="TIGR00755">
    <property type="entry name" value="ksgA"/>
    <property type="match status" value="1"/>
</dbReference>
<dbReference type="PANTHER" id="PTHR11727">
    <property type="entry name" value="DIMETHYLADENOSINE TRANSFERASE"/>
    <property type="match status" value="1"/>
</dbReference>
<dbReference type="PANTHER" id="PTHR11727:SF7">
    <property type="entry name" value="DIMETHYLADENOSINE TRANSFERASE-RELATED"/>
    <property type="match status" value="1"/>
</dbReference>
<dbReference type="Pfam" id="PF00398">
    <property type="entry name" value="RrnaAD"/>
    <property type="match status" value="1"/>
</dbReference>
<dbReference type="SMART" id="SM00650">
    <property type="entry name" value="rADc"/>
    <property type="match status" value="1"/>
</dbReference>
<dbReference type="SUPFAM" id="SSF53335">
    <property type="entry name" value="S-adenosyl-L-methionine-dependent methyltransferases"/>
    <property type="match status" value="1"/>
</dbReference>
<dbReference type="PROSITE" id="PS01131">
    <property type="entry name" value="RRNA_A_DIMETH"/>
    <property type="match status" value="1"/>
</dbReference>
<dbReference type="PROSITE" id="PS51689">
    <property type="entry name" value="SAM_RNA_A_N6_MT"/>
    <property type="match status" value="1"/>
</dbReference>
<keyword id="KW-0963">Cytoplasm</keyword>
<keyword id="KW-0489">Methyltransferase</keyword>
<keyword id="KW-1185">Reference proteome</keyword>
<keyword id="KW-0694">RNA-binding</keyword>
<keyword id="KW-0698">rRNA processing</keyword>
<keyword id="KW-0949">S-adenosyl-L-methionine</keyword>
<keyword id="KW-0808">Transferase</keyword>
<protein>
    <recommendedName>
        <fullName evidence="1">Ribosomal RNA small subunit methyltransferase A</fullName>
        <ecNumber evidence="1">2.1.1.182</ecNumber>
    </recommendedName>
    <alternativeName>
        <fullName evidence="1">16S rRNA (adenine(1518)-N(6)/adenine(1519)-N(6))-dimethyltransferase</fullName>
    </alternativeName>
    <alternativeName>
        <fullName evidence="1">16S rRNA dimethyladenosine transferase</fullName>
    </alternativeName>
    <alternativeName>
        <fullName evidence="1">16S rRNA dimethylase</fullName>
    </alternativeName>
    <alternativeName>
        <fullName evidence="1">S-adenosylmethionine-6-N', N'-adenosyl(rRNA) dimethyltransferase</fullName>
    </alternativeName>
</protein>
<comment type="function">
    <text evidence="1">Specifically dimethylates two adjacent adenosines (A1518 and A1519) in the loop of a conserved hairpin near the 3'-end of 16S rRNA in the 30S particle. May play a critical role in biogenesis of 30S subunits.</text>
</comment>
<comment type="catalytic activity">
    <reaction evidence="1">
        <text>adenosine(1518)/adenosine(1519) in 16S rRNA + 4 S-adenosyl-L-methionine = N(6)-dimethyladenosine(1518)/N(6)-dimethyladenosine(1519) in 16S rRNA + 4 S-adenosyl-L-homocysteine + 4 H(+)</text>
        <dbReference type="Rhea" id="RHEA:19609"/>
        <dbReference type="Rhea" id="RHEA-COMP:10232"/>
        <dbReference type="Rhea" id="RHEA-COMP:10233"/>
        <dbReference type="ChEBI" id="CHEBI:15378"/>
        <dbReference type="ChEBI" id="CHEBI:57856"/>
        <dbReference type="ChEBI" id="CHEBI:59789"/>
        <dbReference type="ChEBI" id="CHEBI:74411"/>
        <dbReference type="ChEBI" id="CHEBI:74493"/>
        <dbReference type="EC" id="2.1.1.182"/>
    </reaction>
</comment>
<comment type="subcellular location">
    <subcellularLocation>
        <location evidence="1">Cytoplasm</location>
    </subcellularLocation>
</comment>
<comment type="similarity">
    <text evidence="1">Belongs to the class I-like SAM-binding methyltransferase superfamily. rRNA adenine N(6)-methyltransferase family. RsmA subfamily.</text>
</comment>
<feature type="chain" id="PRO_1000056593" description="Ribosomal RNA small subunit methyltransferase A">
    <location>
        <begin position="1"/>
        <end position="295"/>
    </location>
</feature>
<feature type="binding site" evidence="1">
    <location>
        <position position="40"/>
    </location>
    <ligand>
        <name>S-adenosyl-L-methionine</name>
        <dbReference type="ChEBI" id="CHEBI:59789"/>
    </ligand>
</feature>
<feature type="binding site" evidence="1">
    <location>
        <position position="42"/>
    </location>
    <ligand>
        <name>S-adenosyl-L-methionine</name>
        <dbReference type="ChEBI" id="CHEBI:59789"/>
    </ligand>
</feature>
<feature type="binding site" evidence="1">
    <location>
        <position position="67"/>
    </location>
    <ligand>
        <name>S-adenosyl-L-methionine</name>
        <dbReference type="ChEBI" id="CHEBI:59789"/>
    </ligand>
</feature>
<feature type="binding site" evidence="1">
    <location>
        <position position="88"/>
    </location>
    <ligand>
        <name>S-adenosyl-L-methionine</name>
        <dbReference type="ChEBI" id="CHEBI:59789"/>
    </ligand>
</feature>
<feature type="binding site" evidence="1">
    <location>
        <position position="118"/>
    </location>
    <ligand>
        <name>S-adenosyl-L-methionine</name>
        <dbReference type="ChEBI" id="CHEBI:59789"/>
    </ligand>
</feature>
<feature type="binding site" evidence="1">
    <location>
        <position position="135"/>
    </location>
    <ligand>
        <name>S-adenosyl-L-methionine</name>
        <dbReference type="ChEBI" id="CHEBI:59789"/>
    </ligand>
</feature>
<accession>A0JU87</accession>
<proteinExistence type="inferred from homology"/>
<reference key="1">
    <citation type="journal article" date="2013" name="Stand. Genomic Sci.">
        <title>Complete genome sequence of Arthrobacter sp. strain FB24.</title>
        <authorList>
            <person name="Nakatsu C.H."/>
            <person name="Barabote R."/>
            <person name="Thompson S."/>
            <person name="Bruce D."/>
            <person name="Detter C."/>
            <person name="Brettin T."/>
            <person name="Han C."/>
            <person name="Beasley F."/>
            <person name="Chen W."/>
            <person name="Konopka A."/>
            <person name="Xie G."/>
        </authorList>
    </citation>
    <scope>NUCLEOTIDE SEQUENCE [LARGE SCALE GENOMIC DNA]</scope>
    <source>
        <strain>FB24</strain>
    </source>
</reference>
<evidence type="ECO:0000255" key="1">
    <source>
        <dbReference type="HAMAP-Rule" id="MF_00607"/>
    </source>
</evidence>